<feature type="chain" id="PRO_1000200978" description="UPF0473 protein LCABL_08490">
    <location>
        <begin position="1"/>
        <end position="106"/>
    </location>
</feature>
<comment type="similarity">
    <text evidence="1">Belongs to the UPF0473 family.</text>
</comment>
<accession>B3WC71</accession>
<protein>
    <recommendedName>
        <fullName evidence="1">UPF0473 protein LCABL_08490</fullName>
    </recommendedName>
</protein>
<name>Y849_LACCB</name>
<organism>
    <name type="scientific">Lacticaseibacillus casei (strain BL23)</name>
    <name type="common">Lactobacillus casei</name>
    <dbReference type="NCBI Taxonomy" id="543734"/>
    <lineage>
        <taxon>Bacteria</taxon>
        <taxon>Bacillati</taxon>
        <taxon>Bacillota</taxon>
        <taxon>Bacilli</taxon>
        <taxon>Lactobacillales</taxon>
        <taxon>Lactobacillaceae</taxon>
        <taxon>Lacticaseibacillus</taxon>
    </lineage>
</organism>
<sequence length="106" mass="11982">MANNEHVTPGEDDQQITLIDEKGNEELYQVLFTFDSEDYGKSYVLLYPASESDDQEVEIQAFSFTPDENGDASSGDLFPIEDDAEWDMVEEVLNTFLADDDSNLKD</sequence>
<reference key="1">
    <citation type="submission" date="2008-06" db="EMBL/GenBank/DDBJ databases">
        <title>Lactobacillus casei BL23 complete genome sequence.</title>
        <authorList>
            <person name="Maze A."/>
            <person name="Boel G."/>
            <person name="Bourand A."/>
            <person name="Loux V."/>
            <person name="Gibrat J.F."/>
            <person name="Zuniga M."/>
            <person name="Hartke A."/>
            <person name="Deutscher J."/>
        </authorList>
    </citation>
    <scope>NUCLEOTIDE SEQUENCE [LARGE SCALE GENOMIC DNA]</scope>
    <source>
        <strain>BL23</strain>
    </source>
</reference>
<dbReference type="EMBL" id="FM177140">
    <property type="protein sequence ID" value="CAQ65972.1"/>
    <property type="molecule type" value="Genomic_DNA"/>
</dbReference>
<dbReference type="KEGG" id="lcb:LCABL_08490"/>
<dbReference type="HOGENOM" id="CLU_146610_2_1_9"/>
<dbReference type="HAMAP" id="MF_01448">
    <property type="entry name" value="UPF0473"/>
    <property type="match status" value="1"/>
</dbReference>
<dbReference type="InterPro" id="IPR009711">
    <property type="entry name" value="UPF0473"/>
</dbReference>
<dbReference type="NCBIfam" id="NF010215">
    <property type="entry name" value="PRK13678.1-2"/>
    <property type="match status" value="1"/>
</dbReference>
<dbReference type="NCBIfam" id="NF010217">
    <property type="entry name" value="PRK13678.1-4"/>
    <property type="match status" value="1"/>
</dbReference>
<dbReference type="PANTHER" id="PTHR40066">
    <property type="entry name" value="UPF0473 PROTEIN CBO2561/CLC_2432"/>
    <property type="match status" value="1"/>
</dbReference>
<dbReference type="PANTHER" id="PTHR40066:SF1">
    <property type="entry name" value="UPF0473 PROTEIN CBO2561_CLC_2432"/>
    <property type="match status" value="1"/>
</dbReference>
<dbReference type="Pfam" id="PF06949">
    <property type="entry name" value="DUF1292"/>
    <property type="match status" value="1"/>
</dbReference>
<evidence type="ECO:0000255" key="1">
    <source>
        <dbReference type="HAMAP-Rule" id="MF_01448"/>
    </source>
</evidence>
<proteinExistence type="inferred from homology"/>
<gene>
    <name type="ordered locus">LCABL_08490</name>
</gene>